<evidence type="ECO:0000255" key="1">
    <source>
        <dbReference type="HAMAP-Rule" id="MF_00358"/>
    </source>
</evidence>
<evidence type="ECO:0000256" key="2">
    <source>
        <dbReference type="SAM" id="MobiDB-lite"/>
    </source>
</evidence>
<evidence type="ECO:0000305" key="3"/>
<feature type="chain" id="PRO_1000005092" description="Small ribosomal subunit protein bS21">
    <location>
        <begin position="1"/>
        <end position="71"/>
    </location>
</feature>
<feature type="region of interest" description="Disordered" evidence="2">
    <location>
        <begin position="48"/>
        <end position="71"/>
    </location>
</feature>
<feature type="compositionally biased region" description="Basic residues" evidence="2">
    <location>
        <begin position="48"/>
        <end position="59"/>
    </location>
</feature>
<feature type="compositionally biased region" description="Basic and acidic residues" evidence="2">
    <location>
        <begin position="60"/>
        <end position="71"/>
    </location>
</feature>
<accession>A4SRB0</accession>
<organism>
    <name type="scientific">Aeromonas salmonicida (strain A449)</name>
    <dbReference type="NCBI Taxonomy" id="382245"/>
    <lineage>
        <taxon>Bacteria</taxon>
        <taxon>Pseudomonadati</taxon>
        <taxon>Pseudomonadota</taxon>
        <taxon>Gammaproteobacteria</taxon>
        <taxon>Aeromonadales</taxon>
        <taxon>Aeromonadaceae</taxon>
        <taxon>Aeromonas</taxon>
    </lineage>
</organism>
<proteinExistence type="inferred from homology"/>
<sequence length="71" mass="8473">MPVIKVRENEPFDVALRRFKRSCEKAGILSEVRSREFYEKPTTIRKRAKASAVKRHAKKLSRENARRIRLY</sequence>
<gene>
    <name evidence="1" type="primary">rpsU</name>
    <name type="ordered locus">ASA_3464</name>
</gene>
<dbReference type="EMBL" id="CP000644">
    <property type="protein sequence ID" value="ABO91432.1"/>
    <property type="molecule type" value="Genomic_DNA"/>
</dbReference>
<dbReference type="RefSeq" id="WP_005309452.1">
    <property type="nucleotide sequence ID" value="NC_009348.1"/>
</dbReference>
<dbReference type="SMR" id="A4SRB0"/>
<dbReference type="STRING" id="29491.GCA_000820065_01058"/>
<dbReference type="GeneID" id="97857504"/>
<dbReference type="KEGG" id="asa:ASA_3464"/>
<dbReference type="eggNOG" id="COG0828">
    <property type="taxonomic scope" value="Bacteria"/>
</dbReference>
<dbReference type="HOGENOM" id="CLU_159258_1_0_6"/>
<dbReference type="Proteomes" id="UP000000225">
    <property type="component" value="Chromosome"/>
</dbReference>
<dbReference type="GO" id="GO:1990904">
    <property type="term" value="C:ribonucleoprotein complex"/>
    <property type="evidence" value="ECO:0007669"/>
    <property type="project" value="UniProtKB-KW"/>
</dbReference>
<dbReference type="GO" id="GO:0005840">
    <property type="term" value="C:ribosome"/>
    <property type="evidence" value="ECO:0007669"/>
    <property type="project" value="UniProtKB-KW"/>
</dbReference>
<dbReference type="GO" id="GO:0003735">
    <property type="term" value="F:structural constituent of ribosome"/>
    <property type="evidence" value="ECO:0007669"/>
    <property type="project" value="InterPro"/>
</dbReference>
<dbReference type="GO" id="GO:0006412">
    <property type="term" value="P:translation"/>
    <property type="evidence" value="ECO:0007669"/>
    <property type="project" value="UniProtKB-UniRule"/>
</dbReference>
<dbReference type="Gene3D" id="1.20.5.1150">
    <property type="entry name" value="Ribosomal protein S8"/>
    <property type="match status" value="1"/>
</dbReference>
<dbReference type="HAMAP" id="MF_00358">
    <property type="entry name" value="Ribosomal_bS21"/>
    <property type="match status" value="1"/>
</dbReference>
<dbReference type="InterPro" id="IPR001911">
    <property type="entry name" value="Ribosomal_bS21"/>
</dbReference>
<dbReference type="InterPro" id="IPR018278">
    <property type="entry name" value="Ribosomal_bS21_CS"/>
</dbReference>
<dbReference type="InterPro" id="IPR038380">
    <property type="entry name" value="Ribosomal_bS21_sf"/>
</dbReference>
<dbReference type="NCBIfam" id="TIGR00030">
    <property type="entry name" value="S21p"/>
    <property type="match status" value="1"/>
</dbReference>
<dbReference type="PANTHER" id="PTHR21109">
    <property type="entry name" value="MITOCHONDRIAL 28S RIBOSOMAL PROTEIN S21"/>
    <property type="match status" value="1"/>
</dbReference>
<dbReference type="PANTHER" id="PTHR21109:SF22">
    <property type="entry name" value="SMALL RIBOSOMAL SUBUNIT PROTEIN BS21"/>
    <property type="match status" value="1"/>
</dbReference>
<dbReference type="Pfam" id="PF01165">
    <property type="entry name" value="Ribosomal_S21"/>
    <property type="match status" value="1"/>
</dbReference>
<dbReference type="PRINTS" id="PR00976">
    <property type="entry name" value="RIBOSOMALS21"/>
</dbReference>
<dbReference type="PROSITE" id="PS01181">
    <property type="entry name" value="RIBOSOMAL_S21"/>
    <property type="match status" value="1"/>
</dbReference>
<comment type="similarity">
    <text evidence="1">Belongs to the bacterial ribosomal protein bS21 family.</text>
</comment>
<protein>
    <recommendedName>
        <fullName evidence="1">Small ribosomal subunit protein bS21</fullName>
    </recommendedName>
    <alternativeName>
        <fullName evidence="3">30S ribosomal protein S21</fullName>
    </alternativeName>
</protein>
<keyword id="KW-0687">Ribonucleoprotein</keyword>
<keyword id="KW-0689">Ribosomal protein</keyword>
<reference key="1">
    <citation type="journal article" date="2008" name="BMC Genomics">
        <title>The genome of Aeromonas salmonicida subsp. salmonicida A449: insights into the evolution of a fish pathogen.</title>
        <authorList>
            <person name="Reith M.E."/>
            <person name="Singh R.K."/>
            <person name="Curtis B."/>
            <person name="Boyd J.M."/>
            <person name="Bouevitch A."/>
            <person name="Kimball J."/>
            <person name="Munholland J."/>
            <person name="Murphy C."/>
            <person name="Sarty D."/>
            <person name="Williams J."/>
            <person name="Nash J.H."/>
            <person name="Johnson S.C."/>
            <person name="Brown L.L."/>
        </authorList>
    </citation>
    <scope>NUCLEOTIDE SEQUENCE [LARGE SCALE GENOMIC DNA]</scope>
    <source>
        <strain>A449</strain>
    </source>
</reference>
<name>RS21_AERS4</name>